<dbReference type="EC" id="7.1.1.2"/>
<dbReference type="EMBL" id="Y18476">
    <property type="protein sequence ID" value="CAA77185.1"/>
    <property type="molecule type" value="Genomic_DNA"/>
</dbReference>
<dbReference type="EMBL" id="X65223">
    <property type="protein sequence ID" value="CAA46329.1"/>
    <property type="molecule type" value="Genomic_DNA"/>
</dbReference>
<dbReference type="PIR" id="S26950">
    <property type="entry name" value="S26950"/>
</dbReference>
<dbReference type="PIR" id="T14241">
    <property type="entry name" value="T14241"/>
</dbReference>
<dbReference type="SMR" id="Q01561"/>
<dbReference type="GO" id="GO:0005743">
    <property type="term" value="C:mitochondrial inner membrane"/>
    <property type="evidence" value="ECO:0007669"/>
    <property type="project" value="UniProtKB-SubCell"/>
</dbReference>
<dbReference type="GO" id="GO:0008137">
    <property type="term" value="F:NADH dehydrogenase (ubiquinone) activity"/>
    <property type="evidence" value="ECO:0007669"/>
    <property type="project" value="UniProtKB-EC"/>
</dbReference>
<dbReference type="GO" id="GO:0042773">
    <property type="term" value="P:ATP synthesis coupled electron transport"/>
    <property type="evidence" value="ECO:0007669"/>
    <property type="project" value="InterPro"/>
</dbReference>
<dbReference type="GO" id="GO:0015990">
    <property type="term" value="P:electron transport coupled proton transport"/>
    <property type="evidence" value="ECO:0007669"/>
    <property type="project" value="TreeGrafter"/>
</dbReference>
<dbReference type="InterPro" id="IPR018393">
    <property type="entry name" value="NADHpl_OxRdtase_5_subgr"/>
</dbReference>
<dbReference type="InterPro" id="IPR001750">
    <property type="entry name" value="ND/Mrp_TM"/>
</dbReference>
<dbReference type="InterPro" id="IPR003945">
    <property type="entry name" value="NU5C-like"/>
</dbReference>
<dbReference type="InterPro" id="IPR001516">
    <property type="entry name" value="Proton_antipo_N"/>
</dbReference>
<dbReference type="NCBIfam" id="TIGR01974">
    <property type="entry name" value="NDH_I_L"/>
    <property type="match status" value="1"/>
</dbReference>
<dbReference type="NCBIfam" id="NF005141">
    <property type="entry name" value="PRK06590.1"/>
    <property type="match status" value="1"/>
</dbReference>
<dbReference type="PANTHER" id="PTHR42829">
    <property type="entry name" value="NADH-UBIQUINONE OXIDOREDUCTASE CHAIN 5"/>
    <property type="match status" value="1"/>
</dbReference>
<dbReference type="PANTHER" id="PTHR42829:SF2">
    <property type="entry name" value="NADH-UBIQUINONE OXIDOREDUCTASE CHAIN 5"/>
    <property type="match status" value="1"/>
</dbReference>
<dbReference type="Pfam" id="PF00361">
    <property type="entry name" value="Proton_antipo_M"/>
    <property type="match status" value="1"/>
</dbReference>
<dbReference type="Pfam" id="PF00662">
    <property type="entry name" value="Proton_antipo_N"/>
    <property type="match status" value="1"/>
</dbReference>
<dbReference type="PRINTS" id="PR01434">
    <property type="entry name" value="NADHDHGNASE5"/>
</dbReference>
<accession>Q01561</accession>
<accession>Q9T9N1</accession>
<feature type="chain" id="PRO_0000118158" description="NADH-ubiquinone oxidoreductase chain 5">
    <location>
        <begin position="1"/>
        <end position="653"/>
    </location>
</feature>
<feature type="transmembrane region" description="Helical" evidence="2">
    <location>
        <begin position="1"/>
        <end position="21"/>
    </location>
</feature>
<feature type="transmembrane region" description="Helical" evidence="2">
    <location>
        <begin position="30"/>
        <end position="50"/>
    </location>
</feature>
<feature type="transmembrane region" description="Helical" evidence="2">
    <location>
        <begin position="81"/>
        <end position="103"/>
    </location>
</feature>
<feature type="transmembrane region" description="Helical" evidence="2">
    <location>
        <begin position="120"/>
        <end position="140"/>
    </location>
</feature>
<feature type="transmembrane region" description="Helical" evidence="2">
    <location>
        <begin position="177"/>
        <end position="197"/>
    </location>
</feature>
<feature type="transmembrane region" description="Helical" evidence="2">
    <location>
        <begin position="200"/>
        <end position="220"/>
    </location>
</feature>
<feature type="transmembrane region" description="Helical" evidence="2">
    <location>
        <begin position="241"/>
        <end position="261"/>
    </location>
</feature>
<feature type="transmembrane region" description="Helical" evidence="2">
    <location>
        <begin position="274"/>
        <end position="294"/>
    </location>
</feature>
<feature type="transmembrane region" description="Helical" evidence="2">
    <location>
        <begin position="301"/>
        <end position="319"/>
    </location>
</feature>
<feature type="transmembrane region" description="Helical" evidence="2">
    <location>
        <begin position="331"/>
        <end position="351"/>
    </location>
</feature>
<feature type="transmembrane region" description="Helical" evidence="2">
    <location>
        <begin position="365"/>
        <end position="385"/>
    </location>
</feature>
<feature type="transmembrane region" description="Helical" evidence="2">
    <location>
        <begin position="403"/>
        <end position="423"/>
    </location>
</feature>
<feature type="transmembrane region" description="Helical" evidence="2">
    <location>
        <begin position="452"/>
        <end position="472"/>
    </location>
</feature>
<feature type="transmembrane region" description="Helical" evidence="2">
    <location>
        <begin position="511"/>
        <end position="531"/>
    </location>
</feature>
<feature type="transmembrane region" description="Helical" evidence="2">
    <location>
        <begin position="610"/>
        <end position="630"/>
    </location>
</feature>
<feature type="transmembrane region" description="Helical" evidence="2">
    <location>
        <begin position="631"/>
        <end position="651"/>
    </location>
</feature>
<sequence length="653" mass="73457">MYLVIIFLPLLGSIISGFFGRKIGVQGAQLITSSFIIITTMLAIFNFFEVGYNNIPLEINLFRWIDSESINILWGFYFDSLTVSMLIPVLIVSSLVHIYSIGYMSHDPHNQRFFSYLSLFTFMMIILVTANNYLLMFLGVEGVGVCSYLLVNFWFTRIAANQSSISAFLTNRVGDCFLTIGMFIIIWSFGNLDYSTVFSLAPYFNQEFITLIGICLLIGAMAKSSQIGLHVWLPQAMEGPTPVSALIHAATMVTAGVYLLMRSSPLIEYSSTVLILCLWLGAITTIFSSIIGLFQQDIKKVIAYSTMSQLGMMVIAIGLSSYNLALFHLVNHAFYKALLFLGAGAVIHSVSDNQDFRKYGGLKPFLPLAYSIMLIASLSLVAIPFMSGFYSKDFILESAYGQFYISSTLVYFIATIGAMFTTLYSVKVLYLTFLTNPNGPLNNYKNVDQGNIFINLPLIILAIFSIFFGYLTKDVFIGLGTSFFIDNRYFIHPSHEIMLDTEFALPTLFKLLPLFFTITLSIIGIMFSEFFGNLLIKFKFTNLGYNIFSLFNQRFLIEFFYNNYITNFVLKLGGQTTKVLYKGSVELLGPYGLEKRLLNLSKNIGSLSTGVITSYALYILIGLIFYVFLLYLNIDNNILLLLLFGIFSTINKK</sequence>
<proteinExistence type="inferred from homology"/>
<name>NU5M_TRIRU</name>
<comment type="function">
    <text evidence="1">Core subunit of the mitochondrial membrane respiratory chain NADH dehydrogenase (Complex I) that is believed to belong to the minimal assembly required for catalysis. Complex I functions in the transfer of electrons from NADH to the respiratory chain. The immediate electron acceptor for the enzyme is believed to be ubiquinone (By similarity).</text>
</comment>
<comment type="catalytic activity">
    <reaction>
        <text>a ubiquinone + NADH + 5 H(+)(in) = a ubiquinol + NAD(+) + 4 H(+)(out)</text>
        <dbReference type="Rhea" id="RHEA:29091"/>
        <dbReference type="Rhea" id="RHEA-COMP:9565"/>
        <dbReference type="Rhea" id="RHEA-COMP:9566"/>
        <dbReference type="ChEBI" id="CHEBI:15378"/>
        <dbReference type="ChEBI" id="CHEBI:16389"/>
        <dbReference type="ChEBI" id="CHEBI:17976"/>
        <dbReference type="ChEBI" id="CHEBI:57540"/>
        <dbReference type="ChEBI" id="CHEBI:57945"/>
        <dbReference type="EC" id="7.1.1.2"/>
    </reaction>
</comment>
<comment type="subcellular location">
    <subcellularLocation>
        <location evidence="1">Mitochondrion inner membrane</location>
        <topology evidence="1">Multi-pass membrane protein</topology>
    </subcellularLocation>
</comment>
<comment type="similarity">
    <text evidence="3">Belongs to the complex I subunit 5 family.</text>
</comment>
<evidence type="ECO:0000250" key="1"/>
<evidence type="ECO:0000255" key="2"/>
<evidence type="ECO:0000305" key="3"/>
<protein>
    <recommendedName>
        <fullName>NADH-ubiquinone oxidoreductase chain 5</fullName>
        <ecNumber>7.1.1.2</ecNumber>
    </recommendedName>
    <alternativeName>
        <fullName>NADH dehydrogenase subunit 5</fullName>
    </alternativeName>
</protein>
<reference key="1">
    <citation type="journal article" date="1999" name="Curr. Genet.">
        <title>Organisation of the mitochondrial genome of Trichophyton rubrum III. DNA sequence analysis of the NADH dehydrogenase subunits 1, 2, 3, 4, 5 and the cytochrome b gene.</title>
        <authorList>
            <person name="de Bievre C."/>
            <person name="Dujon B."/>
        </authorList>
    </citation>
    <scope>NUCLEOTIDE SEQUENCE [GENOMIC DNA]</scope>
    <source>
        <strain>IP 1817.89</strain>
    </source>
</reference>
<reference key="2">
    <citation type="journal article" date="1992" name="Curr. Genet.">
        <title>Mitochondrial DNA sequence analysis of the cytochrome oxidase subunit I and II genes, the ATPase9 gene, the NADH dehydrogenase ND4L and ND5 gene complex, and the glutaminyl, methionyl and arginyl tRNA genes from Trichophyton rubrum.</title>
        <authorList>
            <person name="de Bievre C."/>
            <person name="Dujon B."/>
        </authorList>
    </citation>
    <scope>NUCLEOTIDE SEQUENCE [GENOMIC DNA] OF 1-337</scope>
    <source>
        <strain>IP 1817.89</strain>
    </source>
</reference>
<geneLocation type="mitochondrion"/>
<gene>
    <name type="primary">ND5</name>
    <name type="synonym">NADH5</name>
</gene>
<organism>
    <name type="scientific">Trichophyton rubrum</name>
    <name type="common">Athlete's foot fungus</name>
    <name type="synonym">Epidermophyton rubrum</name>
    <dbReference type="NCBI Taxonomy" id="5551"/>
    <lineage>
        <taxon>Eukaryota</taxon>
        <taxon>Fungi</taxon>
        <taxon>Dikarya</taxon>
        <taxon>Ascomycota</taxon>
        <taxon>Pezizomycotina</taxon>
        <taxon>Eurotiomycetes</taxon>
        <taxon>Eurotiomycetidae</taxon>
        <taxon>Onygenales</taxon>
        <taxon>Arthrodermataceae</taxon>
        <taxon>Trichophyton</taxon>
    </lineage>
</organism>
<keyword id="KW-0249">Electron transport</keyword>
<keyword id="KW-0472">Membrane</keyword>
<keyword id="KW-0496">Mitochondrion</keyword>
<keyword id="KW-0999">Mitochondrion inner membrane</keyword>
<keyword id="KW-0520">NAD</keyword>
<keyword id="KW-0679">Respiratory chain</keyword>
<keyword id="KW-1278">Translocase</keyword>
<keyword id="KW-0812">Transmembrane</keyword>
<keyword id="KW-1133">Transmembrane helix</keyword>
<keyword id="KW-0813">Transport</keyword>
<keyword id="KW-0830">Ubiquinone</keyword>